<feature type="chain" id="PRO_0000387459" description="tRNA1(Val) (adenine(37)-N6)-methyltransferase">
    <location>
        <begin position="1"/>
        <end position="252"/>
    </location>
</feature>
<dbReference type="EC" id="2.1.1.223" evidence="1"/>
<dbReference type="EMBL" id="CP000950">
    <property type="protein sequence ID" value="ACA67478.1"/>
    <property type="molecule type" value="Genomic_DNA"/>
</dbReference>
<dbReference type="SMR" id="B1JRB8"/>
<dbReference type="KEGG" id="ypy:YPK_1180"/>
<dbReference type="GO" id="GO:0005737">
    <property type="term" value="C:cytoplasm"/>
    <property type="evidence" value="ECO:0007669"/>
    <property type="project" value="UniProtKB-SubCell"/>
</dbReference>
<dbReference type="GO" id="GO:0003676">
    <property type="term" value="F:nucleic acid binding"/>
    <property type="evidence" value="ECO:0007669"/>
    <property type="project" value="InterPro"/>
</dbReference>
<dbReference type="GO" id="GO:0016430">
    <property type="term" value="F:tRNA (adenine-N6)-methyltransferase activity"/>
    <property type="evidence" value="ECO:0007669"/>
    <property type="project" value="UniProtKB-UniRule"/>
</dbReference>
<dbReference type="GO" id="GO:0032259">
    <property type="term" value="P:methylation"/>
    <property type="evidence" value="ECO:0007669"/>
    <property type="project" value="UniProtKB-KW"/>
</dbReference>
<dbReference type="GO" id="GO:0008033">
    <property type="term" value="P:tRNA processing"/>
    <property type="evidence" value="ECO:0007669"/>
    <property type="project" value="UniProtKB-UniRule"/>
</dbReference>
<dbReference type="CDD" id="cd02440">
    <property type="entry name" value="AdoMet_MTases"/>
    <property type="match status" value="1"/>
</dbReference>
<dbReference type="Gene3D" id="3.40.50.150">
    <property type="entry name" value="Vaccinia Virus protein VP39"/>
    <property type="match status" value="1"/>
</dbReference>
<dbReference type="HAMAP" id="MF_01872">
    <property type="entry name" value="tRNA_methyltr_YfiC"/>
    <property type="match status" value="1"/>
</dbReference>
<dbReference type="InterPro" id="IPR002052">
    <property type="entry name" value="DNA_methylase_N6_adenine_CS"/>
</dbReference>
<dbReference type="InterPro" id="IPR029063">
    <property type="entry name" value="SAM-dependent_MTases_sf"/>
</dbReference>
<dbReference type="InterPro" id="IPR007848">
    <property type="entry name" value="Small_mtfrase_dom"/>
</dbReference>
<dbReference type="InterPro" id="IPR050210">
    <property type="entry name" value="tRNA_Adenine-N(6)_MTase"/>
</dbReference>
<dbReference type="InterPro" id="IPR022882">
    <property type="entry name" value="tRNA_adenine-N6_MeTrfase"/>
</dbReference>
<dbReference type="NCBIfam" id="NF047853">
    <property type="entry name" value="tRm6a37MtseTrmN"/>
    <property type="match status" value="1"/>
</dbReference>
<dbReference type="PANTHER" id="PTHR47739">
    <property type="entry name" value="TRNA1(VAL) (ADENINE(37)-N6)-METHYLTRANSFERASE"/>
    <property type="match status" value="1"/>
</dbReference>
<dbReference type="PANTHER" id="PTHR47739:SF1">
    <property type="entry name" value="TRNA1(VAL) (ADENINE(37)-N6)-METHYLTRANSFERASE"/>
    <property type="match status" value="1"/>
</dbReference>
<dbReference type="Pfam" id="PF05175">
    <property type="entry name" value="MTS"/>
    <property type="match status" value="1"/>
</dbReference>
<dbReference type="PRINTS" id="PR00507">
    <property type="entry name" value="N12N6MTFRASE"/>
</dbReference>
<dbReference type="SUPFAM" id="SSF53335">
    <property type="entry name" value="S-adenosyl-L-methionine-dependent methyltransferases"/>
    <property type="match status" value="1"/>
</dbReference>
<dbReference type="PROSITE" id="PS00092">
    <property type="entry name" value="N6_MTASE"/>
    <property type="match status" value="1"/>
</dbReference>
<proteinExistence type="inferred from homology"/>
<organism>
    <name type="scientific">Yersinia pseudotuberculosis serotype O:3 (strain YPIII)</name>
    <dbReference type="NCBI Taxonomy" id="502800"/>
    <lineage>
        <taxon>Bacteria</taxon>
        <taxon>Pseudomonadati</taxon>
        <taxon>Pseudomonadota</taxon>
        <taxon>Gammaproteobacteria</taxon>
        <taxon>Enterobacterales</taxon>
        <taxon>Yersiniaceae</taxon>
        <taxon>Yersinia</taxon>
    </lineage>
</organism>
<accession>B1JRB8</accession>
<reference key="1">
    <citation type="submission" date="2008-02" db="EMBL/GenBank/DDBJ databases">
        <title>Complete sequence of Yersinia pseudotuberculosis YPIII.</title>
        <authorList>
            <consortium name="US DOE Joint Genome Institute"/>
            <person name="Copeland A."/>
            <person name="Lucas S."/>
            <person name="Lapidus A."/>
            <person name="Glavina del Rio T."/>
            <person name="Dalin E."/>
            <person name="Tice H."/>
            <person name="Bruce D."/>
            <person name="Goodwin L."/>
            <person name="Pitluck S."/>
            <person name="Munk A.C."/>
            <person name="Brettin T."/>
            <person name="Detter J.C."/>
            <person name="Han C."/>
            <person name="Tapia R."/>
            <person name="Schmutz J."/>
            <person name="Larimer F."/>
            <person name="Land M."/>
            <person name="Hauser L."/>
            <person name="Challacombe J.F."/>
            <person name="Green L."/>
            <person name="Lindler L.E."/>
            <person name="Nikolich M.P."/>
            <person name="Richardson P."/>
        </authorList>
    </citation>
    <scope>NUCLEOTIDE SEQUENCE [LARGE SCALE GENOMIC DNA]</scope>
    <source>
        <strain>YPIII</strain>
    </source>
</reference>
<keyword id="KW-0963">Cytoplasm</keyword>
<keyword id="KW-0489">Methyltransferase</keyword>
<keyword id="KW-0949">S-adenosyl-L-methionine</keyword>
<keyword id="KW-0808">Transferase</keyword>
<keyword id="KW-0819">tRNA processing</keyword>
<name>TRMN6_YERPY</name>
<evidence type="ECO:0000255" key="1">
    <source>
        <dbReference type="HAMAP-Rule" id="MF_01872"/>
    </source>
</evidence>
<sequence length="252" mass="28204">MVTNVGEQLKKQPVLRGGGFTFKQFFVAHDRCAMKVGTDGVLLGAWVPVLHARRVLDIGCGSGLIALMIAQRSLPQVQIDGVELEPAAAQQASSNVELSPWAERIHIHQQDIHQFAENHPHQYDLIVSNPPYFAPAIACRDEARDTARYTGSLTHDTLLNCAEKLITEDGMFCVVLPHELGIEFARLAGQQGWFVRCQVDIRDRPGKPLHRMLLTLSRQAGETVYQHLALRQSEGVYSPEFCQLISDFYLNY</sequence>
<gene>
    <name type="ordered locus">YPK_1180</name>
</gene>
<protein>
    <recommendedName>
        <fullName evidence="1">tRNA1(Val) (adenine(37)-N6)-methyltransferase</fullName>
        <ecNumber evidence="1">2.1.1.223</ecNumber>
    </recommendedName>
    <alternativeName>
        <fullName evidence="1">tRNA m6A37 methyltransferase</fullName>
    </alternativeName>
</protein>
<comment type="function">
    <text evidence="1">Specifically methylates the adenine in position 37 of tRNA(1)(Val) (anticodon cmo5UAC).</text>
</comment>
<comment type="catalytic activity">
    <reaction evidence="1">
        <text>adenosine(37) in tRNA1(Val) + S-adenosyl-L-methionine = N(6)-methyladenosine(37) in tRNA1(Val) + S-adenosyl-L-homocysteine + H(+)</text>
        <dbReference type="Rhea" id="RHEA:43160"/>
        <dbReference type="Rhea" id="RHEA-COMP:10369"/>
        <dbReference type="Rhea" id="RHEA-COMP:10370"/>
        <dbReference type="ChEBI" id="CHEBI:15378"/>
        <dbReference type="ChEBI" id="CHEBI:57856"/>
        <dbReference type="ChEBI" id="CHEBI:59789"/>
        <dbReference type="ChEBI" id="CHEBI:74411"/>
        <dbReference type="ChEBI" id="CHEBI:74449"/>
        <dbReference type="EC" id="2.1.1.223"/>
    </reaction>
</comment>
<comment type="subcellular location">
    <subcellularLocation>
        <location evidence="1">Cytoplasm</location>
    </subcellularLocation>
</comment>
<comment type="similarity">
    <text evidence="1">Belongs to the methyltransferase superfamily. tRNA (adenine-N(6)-)-methyltransferase family.</text>
</comment>